<protein>
    <recommendedName>
        <fullName evidence="1">Deoxyhypusine hydroxylase</fullName>
        <shortName evidence="1">DOHH</shortName>
        <ecNumber evidence="1">1.14.99.29</ecNumber>
    </recommendedName>
    <alternativeName>
        <fullName evidence="1">Deoxyhypusine dioxygenase</fullName>
    </alternativeName>
    <alternativeName>
        <fullName evidence="1">Deoxyhypusine monooxygenase</fullName>
    </alternativeName>
</protein>
<accession>Q4HZ35</accession>
<accession>A0A0E0SEE4</accession>
<accession>A0A1C3YLE9</accession>
<accession>V6RWN4</accession>
<feature type="chain" id="PRO_0000283666" description="Deoxyhypusine hydroxylase">
    <location>
        <begin position="1"/>
        <end position="337"/>
    </location>
</feature>
<feature type="repeat" description="HEAT-like PBS-type 1">
    <location>
        <begin position="73"/>
        <end position="99"/>
    </location>
</feature>
<feature type="repeat" description="HEAT-like PBS-type 2">
    <location>
        <begin position="106"/>
        <end position="132"/>
    </location>
</feature>
<feature type="repeat" description="HEAT-like PBS-type 3">
    <location>
        <begin position="202"/>
        <end position="235"/>
    </location>
</feature>
<feature type="repeat" description="HEAT-like PBS-type 4">
    <location>
        <begin position="240"/>
        <end position="266"/>
    </location>
</feature>
<feature type="repeat" description="HEAT-like PBS-type 5">
    <location>
        <begin position="273"/>
        <end position="300"/>
    </location>
</feature>
<feature type="region of interest" description="Disordered" evidence="2">
    <location>
        <begin position="156"/>
        <end position="183"/>
    </location>
</feature>
<feature type="compositionally biased region" description="Basic and acidic residues" evidence="2">
    <location>
        <begin position="156"/>
        <end position="165"/>
    </location>
</feature>
<feature type="binding site" evidence="1">
    <location>
        <position position="75"/>
    </location>
    <ligand>
        <name>Fe cation</name>
        <dbReference type="ChEBI" id="CHEBI:24875"/>
        <label>1</label>
    </ligand>
</feature>
<feature type="binding site" evidence="1">
    <location>
        <position position="76"/>
    </location>
    <ligand>
        <name>Fe cation</name>
        <dbReference type="ChEBI" id="CHEBI:24875"/>
        <label>1</label>
    </ligand>
</feature>
<feature type="binding site" evidence="1">
    <location>
        <position position="108"/>
    </location>
    <ligand>
        <name>Fe cation</name>
        <dbReference type="ChEBI" id="CHEBI:24875"/>
        <label>1</label>
    </ligand>
</feature>
<feature type="binding site" evidence="1">
    <location>
        <position position="109"/>
    </location>
    <ligand>
        <name>Fe cation</name>
        <dbReference type="ChEBI" id="CHEBI:24875"/>
        <label>1</label>
    </ligand>
</feature>
<feature type="binding site" evidence="1">
    <location>
        <position position="242"/>
    </location>
    <ligand>
        <name>Fe cation</name>
        <dbReference type="ChEBI" id="CHEBI:24875"/>
        <label>2</label>
    </ligand>
</feature>
<feature type="binding site" evidence="1">
    <location>
        <position position="243"/>
    </location>
    <ligand>
        <name>Fe cation</name>
        <dbReference type="ChEBI" id="CHEBI:24875"/>
        <label>2</label>
    </ligand>
</feature>
<feature type="binding site" evidence="1">
    <location>
        <position position="275"/>
    </location>
    <ligand>
        <name>Fe cation</name>
        <dbReference type="ChEBI" id="CHEBI:24875"/>
        <label>2</label>
    </ligand>
</feature>
<feature type="binding site" evidence="1">
    <location>
        <position position="276"/>
    </location>
    <ligand>
        <name>Fe cation</name>
        <dbReference type="ChEBI" id="CHEBI:24875"/>
        <label>2</label>
    </ligand>
</feature>
<dbReference type="EC" id="1.14.99.29" evidence="1"/>
<dbReference type="EMBL" id="DS231668">
    <property type="protein sequence ID" value="ESU16395.1"/>
    <property type="molecule type" value="Genomic_DNA"/>
</dbReference>
<dbReference type="EMBL" id="HG970335">
    <property type="protein sequence ID" value="SCB65372.1"/>
    <property type="status" value="ALT_INIT"/>
    <property type="molecule type" value="Genomic_DNA"/>
</dbReference>
<dbReference type="RefSeq" id="XP_011327921.1">
    <property type="nucleotide sequence ID" value="XM_011329619.1"/>
</dbReference>
<dbReference type="SMR" id="Q4HZ35"/>
<dbReference type="FunCoup" id="Q4HZ35">
    <property type="interactions" value="910"/>
</dbReference>
<dbReference type="STRING" id="229533.Q4HZ35"/>
<dbReference type="GeneID" id="23556707"/>
<dbReference type="KEGG" id="fgr:FGSG_09773"/>
<dbReference type="VEuPathDB" id="FungiDB:FGRAMPH1_01G26311"/>
<dbReference type="eggNOG" id="KOG0567">
    <property type="taxonomic scope" value="Eukaryota"/>
</dbReference>
<dbReference type="HOGENOM" id="CLU_053974_0_0_1"/>
<dbReference type="InParanoid" id="Q4HZ35"/>
<dbReference type="OrthoDB" id="119527at110618"/>
<dbReference type="UniPathway" id="UPA00354"/>
<dbReference type="PHI-base" id="PHI:6259"/>
<dbReference type="Proteomes" id="UP000070720">
    <property type="component" value="Chromosome 4"/>
</dbReference>
<dbReference type="GO" id="GO:0005737">
    <property type="term" value="C:cytoplasm"/>
    <property type="evidence" value="ECO:0007669"/>
    <property type="project" value="UniProtKB-SubCell"/>
</dbReference>
<dbReference type="GO" id="GO:0005634">
    <property type="term" value="C:nucleus"/>
    <property type="evidence" value="ECO:0007669"/>
    <property type="project" value="UniProtKB-SubCell"/>
</dbReference>
<dbReference type="GO" id="GO:0019135">
    <property type="term" value="F:deoxyhypusine monooxygenase activity"/>
    <property type="evidence" value="ECO:0007669"/>
    <property type="project" value="UniProtKB-UniRule"/>
</dbReference>
<dbReference type="GO" id="GO:0046872">
    <property type="term" value="F:metal ion binding"/>
    <property type="evidence" value="ECO:0007669"/>
    <property type="project" value="UniProtKB-KW"/>
</dbReference>
<dbReference type="Gene3D" id="1.25.10.10">
    <property type="entry name" value="Leucine-rich Repeat Variant"/>
    <property type="match status" value="2"/>
</dbReference>
<dbReference type="HAMAP" id="MF_03101">
    <property type="entry name" value="Deoxyhypusine_hydroxylase"/>
    <property type="match status" value="1"/>
</dbReference>
<dbReference type="InterPro" id="IPR011989">
    <property type="entry name" value="ARM-like"/>
</dbReference>
<dbReference type="InterPro" id="IPR016024">
    <property type="entry name" value="ARM-type_fold"/>
</dbReference>
<dbReference type="InterPro" id="IPR027517">
    <property type="entry name" value="Deoxyhypusine_hydroxylase"/>
</dbReference>
<dbReference type="InterPro" id="IPR021133">
    <property type="entry name" value="HEAT_type_2"/>
</dbReference>
<dbReference type="InterPro" id="IPR004155">
    <property type="entry name" value="PBS_lyase_HEAT"/>
</dbReference>
<dbReference type="PANTHER" id="PTHR12697:SF5">
    <property type="entry name" value="DEOXYHYPUSINE HYDROXYLASE"/>
    <property type="match status" value="1"/>
</dbReference>
<dbReference type="PANTHER" id="PTHR12697">
    <property type="entry name" value="PBS LYASE HEAT-LIKE PROTEIN"/>
    <property type="match status" value="1"/>
</dbReference>
<dbReference type="Pfam" id="PF13646">
    <property type="entry name" value="HEAT_2"/>
    <property type="match status" value="2"/>
</dbReference>
<dbReference type="SMART" id="SM00567">
    <property type="entry name" value="EZ_HEAT"/>
    <property type="match status" value="6"/>
</dbReference>
<dbReference type="SUPFAM" id="SSF48371">
    <property type="entry name" value="ARM repeat"/>
    <property type="match status" value="1"/>
</dbReference>
<dbReference type="PROSITE" id="PS50077">
    <property type="entry name" value="HEAT_REPEAT"/>
    <property type="match status" value="1"/>
</dbReference>
<proteinExistence type="inferred from homology"/>
<evidence type="ECO:0000255" key="1">
    <source>
        <dbReference type="HAMAP-Rule" id="MF_03101"/>
    </source>
</evidence>
<evidence type="ECO:0000256" key="2">
    <source>
        <dbReference type="SAM" id="MobiDB-lite"/>
    </source>
</evidence>
<evidence type="ECO:0000305" key="3"/>
<comment type="function">
    <text evidence="1">Catalyzes the hydroxylation of the N(6)-(4-aminobutyl)-L-lysine intermediate to form hypusine, an essential post-translational modification only found in mature eIF-5A factor.</text>
</comment>
<comment type="catalytic activity">
    <reaction evidence="1">
        <text>[eIF5A protein]-deoxyhypusine + AH2 + O2 = [eIF5A protein]-hypusine + A + H2O</text>
        <dbReference type="Rhea" id="RHEA:14101"/>
        <dbReference type="Rhea" id="RHEA-COMP:10144"/>
        <dbReference type="Rhea" id="RHEA-COMP:12592"/>
        <dbReference type="ChEBI" id="CHEBI:13193"/>
        <dbReference type="ChEBI" id="CHEBI:15377"/>
        <dbReference type="ChEBI" id="CHEBI:15379"/>
        <dbReference type="ChEBI" id="CHEBI:17499"/>
        <dbReference type="ChEBI" id="CHEBI:82657"/>
        <dbReference type="ChEBI" id="CHEBI:91175"/>
        <dbReference type="EC" id="1.14.99.29"/>
    </reaction>
</comment>
<comment type="cofactor">
    <cofactor evidence="1">
        <name>Fe(2+)</name>
        <dbReference type="ChEBI" id="CHEBI:29033"/>
    </cofactor>
    <text evidence="1">Binds 2 Fe(2+) ions per subunit.</text>
</comment>
<comment type="pathway">
    <text evidence="1">Protein modification; eIF5A hypusination.</text>
</comment>
<comment type="subcellular location">
    <subcellularLocation>
        <location evidence="1">Cytoplasm</location>
    </subcellularLocation>
    <subcellularLocation>
        <location evidence="1">Nucleus</location>
    </subcellularLocation>
</comment>
<comment type="similarity">
    <text evidence="1">Belongs to the deoxyhypusine hydroxylase family.</text>
</comment>
<comment type="sequence caution" evidence="3">
    <conflict type="erroneous initiation">
        <sequence resource="EMBL-CDS" id="SCB65372"/>
    </conflict>
    <text>Extended N-terminus.</text>
</comment>
<sequence>MSPSADTPEISNSADSTVLSLKKSLCSEDSPLPIRFRALFSLKHVATTADDDATRVAAIEAIAAGFASPSALLKHELAYCLGQTGNTAAVKPLRQVLSDLKEDPMCRHEAAEALGALGWADNLDILREYRDRKEEDISIVETCEIAIERIEWENSAERQKEKLRPSDFASIDPAPPMPESDKEAEVEDLGRKLMDTNADLFSRYRAMFALRDLASPPDLPTATPAVLALAKGLSDSSALFRHEIAFVFGQLSHPASIPALTEALSNTNEASMVRHEAAEALGSLGEKDGVEDTLRKFLHDKEKVVRESCIVALDIAEYEKGEDAEYALIPESAGAAA</sequence>
<organism>
    <name type="scientific">Gibberella zeae (strain ATCC MYA-4620 / CBS 123657 / FGSC 9075 / NRRL 31084 / PH-1)</name>
    <name type="common">Wheat head blight fungus</name>
    <name type="synonym">Fusarium graminearum</name>
    <dbReference type="NCBI Taxonomy" id="229533"/>
    <lineage>
        <taxon>Eukaryota</taxon>
        <taxon>Fungi</taxon>
        <taxon>Dikarya</taxon>
        <taxon>Ascomycota</taxon>
        <taxon>Pezizomycotina</taxon>
        <taxon>Sordariomycetes</taxon>
        <taxon>Hypocreomycetidae</taxon>
        <taxon>Hypocreales</taxon>
        <taxon>Nectriaceae</taxon>
        <taxon>Fusarium</taxon>
    </lineage>
</organism>
<keyword id="KW-0963">Cytoplasm</keyword>
<keyword id="KW-0386">Hypusine biosynthesis</keyword>
<keyword id="KW-0408">Iron</keyword>
<keyword id="KW-0479">Metal-binding</keyword>
<keyword id="KW-0503">Monooxygenase</keyword>
<keyword id="KW-0539">Nucleus</keyword>
<keyword id="KW-0560">Oxidoreductase</keyword>
<keyword id="KW-1185">Reference proteome</keyword>
<keyword id="KW-0677">Repeat</keyword>
<reference key="1">
    <citation type="journal article" date="2007" name="Science">
        <title>The Fusarium graminearum genome reveals a link between localized polymorphism and pathogen specialization.</title>
        <authorList>
            <person name="Cuomo C.A."/>
            <person name="Gueldener U."/>
            <person name="Xu J.-R."/>
            <person name="Trail F."/>
            <person name="Turgeon B.G."/>
            <person name="Di Pietro A."/>
            <person name="Walton J.D."/>
            <person name="Ma L.-J."/>
            <person name="Baker S.E."/>
            <person name="Rep M."/>
            <person name="Adam G."/>
            <person name="Antoniw J."/>
            <person name="Baldwin T."/>
            <person name="Calvo S.E."/>
            <person name="Chang Y.-L."/>
            <person name="DeCaprio D."/>
            <person name="Gale L.R."/>
            <person name="Gnerre S."/>
            <person name="Goswami R.S."/>
            <person name="Hammond-Kosack K."/>
            <person name="Harris L.J."/>
            <person name="Hilburn K."/>
            <person name="Kennell J.C."/>
            <person name="Kroken S."/>
            <person name="Magnuson J.K."/>
            <person name="Mannhaupt G."/>
            <person name="Mauceli E.W."/>
            <person name="Mewes H.-W."/>
            <person name="Mitterbauer R."/>
            <person name="Muehlbauer G."/>
            <person name="Muensterkoetter M."/>
            <person name="Nelson D."/>
            <person name="O'Donnell K."/>
            <person name="Ouellet T."/>
            <person name="Qi W."/>
            <person name="Quesneville H."/>
            <person name="Roncero M.I.G."/>
            <person name="Seong K.-Y."/>
            <person name="Tetko I.V."/>
            <person name="Urban M."/>
            <person name="Waalwijk C."/>
            <person name="Ward T.J."/>
            <person name="Yao J."/>
            <person name="Birren B.W."/>
            <person name="Kistler H.C."/>
        </authorList>
    </citation>
    <scope>NUCLEOTIDE SEQUENCE [LARGE SCALE GENOMIC DNA]</scope>
    <source>
        <strain>ATCC MYA-4620 / CBS 123657 / FGSC 9075 / NRRL 31084 / PH-1</strain>
    </source>
</reference>
<reference key="2">
    <citation type="journal article" date="2010" name="Nature">
        <title>Comparative genomics reveals mobile pathogenicity chromosomes in Fusarium.</title>
        <authorList>
            <person name="Ma L.-J."/>
            <person name="van der Does H.C."/>
            <person name="Borkovich K.A."/>
            <person name="Coleman J.J."/>
            <person name="Daboussi M.-J."/>
            <person name="Di Pietro A."/>
            <person name="Dufresne M."/>
            <person name="Freitag M."/>
            <person name="Grabherr M."/>
            <person name="Henrissat B."/>
            <person name="Houterman P.M."/>
            <person name="Kang S."/>
            <person name="Shim W.-B."/>
            <person name="Woloshuk C."/>
            <person name="Xie X."/>
            <person name="Xu J.-R."/>
            <person name="Antoniw J."/>
            <person name="Baker S.E."/>
            <person name="Bluhm B.H."/>
            <person name="Breakspear A."/>
            <person name="Brown D.W."/>
            <person name="Butchko R.A.E."/>
            <person name="Chapman S."/>
            <person name="Coulson R."/>
            <person name="Coutinho P.M."/>
            <person name="Danchin E.G.J."/>
            <person name="Diener A."/>
            <person name="Gale L.R."/>
            <person name="Gardiner D.M."/>
            <person name="Goff S."/>
            <person name="Hammond-Kosack K.E."/>
            <person name="Hilburn K."/>
            <person name="Hua-Van A."/>
            <person name="Jonkers W."/>
            <person name="Kazan K."/>
            <person name="Kodira C.D."/>
            <person name="Koehrsen M."/>
            <person name="Kumar L."/>
            <person name="Lee Y.-H."/>
            <person name="Li L."/>
            <person name="Manners J.M."/>
            <person name="Miranda-Saavedra D."/>
            <person name="Mukherjee M."/>
            <person name="Park G."/>
            <person name="Park J."/>
            <person name="Park S.-Y."/>
            <person name="Proctor R.H."/>
            <person name="Regev A."/>
            <person name="Ruiz-Roldan M.C."/>
            <person name="Sain D."/>
            <person name="Sakthikumar S."/>
            <person name="Sykes S."/>
            <person name="Schwartz D.C."/>
            <person name="Turgeon B.G."/>
            <person name="Wapinski I."/>
            <person name="Yoder O."/>
            <person name="Young S."/>
            <person name="Zeng Q."/>
            <person name="Zhou S."/>
            <person name="Galagan J."/>
            <person name="Cuomo C.A."/>
            <person name="Kistler H.C."/>
            <person name="Rep M."/>
        </authorList>
    </citation>
    <scope>GENOME REANNOTATION</scope>
    <source>
        <strain>ATCC MYA-4620 / CBS 123657 / FGSC 9075 / NRRL 31084 / PH-1</strain>
    </source>
</reference>
<reference key="3">
    <citation type="journal article" date="2015" name="BMC Genomics">
        <title>The completed genome sequence of the pathogenic ascomycete fungus Fusarium graminearum.</title>
        <authorList>
            <person name="King R."/>
            <person name="Urban M."/>
            <person name="Hammond-Kosack M.C.U."/>
            <person name="Hassani-Pak K."/>
            <person name="Hammond-Kosack K.E."/>
        </authorList>
    </citation>
    <scope>NUCLEOTIDE SEQUENCE [LARGE SCALE GENOMIC DNA]</scope>
    <source>
        <strain>ATCC MYA-4620 / CBS 123657 / FGSC 9075 / NRRL 31084 / PH-1</strain>
    </source>
</reference>
<gene>
    <name evidence="1" type="primary">LIA1</name>
    <name type="ORF">FGRAMPH1_01T26311</name>
    <name type="ORF">FGRRES_09773</name>
    <name type="ORF">FGSG_09773</name>
</gene>
<name>DOHH_GIBZE</name>